<keyword id="KW-0903">Direct protein sequencing</keyword>
<keyword id="KW-1015">Disulfide bond</keyword>
<keyword id="KW-0611">Plant defense</keyword>
<accession>C0HKI2</accession>
<sequence length="28" mass="2908">GVACGESCVYLPCFTVGCTCTSSQCFKN</sequence>
<reference evidence="4" key="1">
    <citation type="journal article" date="2017" name="J. Nat. Prod.">
        <title>Understanding the Diversity and Distribution of Cyclotides from Plants of Varied Genetic Origin.</title>
        <authorList>
            <person name="Ravipati A.S."/>
            <person name="Poth A.G."/>
            <person name="Troeira Henriques S."/>
            <person name="Bhandari M."/>
            <person name="Huang Y.H."/>
            <person name="Nino J."/>
            <person name="Colgrave M.L."/>
            <person name="Craik D.J."/>
        </authorList>
    </citation>
    <scope>PROTEIN SEQUENCE</scope>
</reference>
<proteinExistence type="evidence at protein level"/>
<evidence type="ECO:0000255" key="1">
    <source>
        <dbReference type="PROSITE-ProRule" id="PRU00395"/>
    </source>
</evidence>
<evidence type="ECO:0000269" key="2">
    <source>
    </source>
</evidence>
<evidence type="ECO:0000303" key="3">
    <source>
    </source>
</evidence>
<evidence type="ECO:0000305" key="4"/>
<protein>
    <recommendedName>
        <fullName evidence="3">Cyclotide ltri-A</fullName>
    </recommendedName>
</protein>
<comment type="function">
    <text evidence="1">Probably participates in a plant defense mechanism.</text>
</comment>
<comment type="domain">
    <text evidence="4">The presence of a 'disulfide through disulfide knot' structurally defines this protein as a knottin.</text>
</comment>
<comment type="PTM">
    <text evidence="1">This is a cyclic peptide.</text>
</comment>
<comment type="similarity">
    <text evidence="1">Belongs to the cyclotide family. Bracelet subfamily.</text>
</comment>
<comment type="caution">
    <text evidence="1">This peptide is cyclic. The start position was chosen by similarity to Oak1 (kalata B1) for which the DNA sequence is known.</text>
</comment>
<name>CYLRA_LEOTR</name>
<feature type="peptide" id="PRO_0000441353" description="Cyclotide ltri-A" evidence="2">
    <location>
        <begin position="1"/>
        <end position="28"/>
    </location>
</feature>
<feature type="disulfide bond" evidence="1">
    <location>
        <begin position="4"/>
        <end position="18"/>
    </location>
</feature>
<feature type="disulfide bond" evidence="1">
    <location>
        <begin position="8"/>
        <end position="20"/>
    </location>
</feature>
<feature type="disulfide bond" evidence="1">
    <location>
        <begin position="13"/>
        <end position="25"/>
    </location>
</feature>
<feature type="cross-link" description="Cyclopeptide (Gly-Asn)" evidence="3">
    <location>
        <begin position="1"/>
        <end position="28"/>
    </location>
</feature>
<organism evidence="3">
    <name type="scientific">Leonia triandra</name>
    <dbReference type="NCBI Taxonomy" id="1977830"/>
    <lineage>
        <taxon>Eukaryota</taxon>
        <taxon>Viridiplantae</taxon>
        <taxon>Streptophyta</taxon>
        <taxon>Embryophyta</taxon>
        <taxon>Tracheophyta</taxon>
        <taxon>Spermatophyta</taxon>
        <taxon>Magnoliopsida</taxon>
        <taxon>eudicotyledons</taxon>
        <taxon>Gunneridae</taxon>
        <taxon>Pentapetalae</taxon>
        <taxon>rosids</taxon>
        <taxon>fabids</taxon>
        <taxon>Malpighiales</taxon>
        <taxon>Violaceae</taxon>
        <taxon>Leonia</taxon>
    </lineage>
</organism>
<dbReference type="SMR" id="C0HKI2"/>
<dbReference type="GO" id="GO:0006952">
    <property type="term" value="P:defense response"/>
    <property type="evidence" value="ECO:0007669"/>
    <property type="project" value="UniProtKB-KW"/>
</dbReference>
<dbReference type="InterPro" id="IPR005535">
    <property type="entry name" value="Cyclotide"/>
</dbReference>
<dbReference type="InterPro" id="IPR036146">
    <property type="entry name" value="Cyclotide_sf"/>
</dbReference>
<dbReference type="Pfam" id="PF03784">
    <property type="entry name" value="Cyclotide"/>
    <property type="match status" value="1"/>
</dbReference>
<dbReference type="PIRSF" id="PIRSF037891">
    <property type="entry name" value="Cycloviolacin"/>
    <property type="match status" value="1"/>
</dbReference>
<dbReference type="SUPFAM" id="SSF57038">
    <property type="entry name" value="Cyclotides"/>
    <property type="match status" value="1"/>
</dbReference>
<dbReference type="PROSITE" id="PS51052">
    <property type="entry name" value="CYCLOTIDE"/>
    <property type="match status" value="1"/>
</dbReference>